<comment type="function">
    <text evidence="1">Synthesizes alpha-1,4-glucan chains using ADP-glucose.</text>
</comment>
<comment type="catalytic activity">
    <reaction evidence="1">
        <text>[(1-&gt;4)-alpha-D-glucosyl](n) + ADP-alpha-D-glucose = [(1-&gt;4)-alpha-D-glucosyl](n+1) + ADP + H(+)</text>
        <dbReference type="Rhea" id="RHEA:18189"/>
        <dbReference type="Rhea" id="RHEA-COMP:9584"/>
        <dbReference type="Rhea" id="RHEA-COMP:9587"/>
        <dbReference type="ChEBI" id="CHEBI:15378"/>
        <dbReference type="ChEBI" id="CHEBI:15444"/>
        <dbReference type="ChEBI" id="CHEBI:57498"/>
        <dbReference type="ChEBI" id="CHEBI:456216"/>
        <dbReference type="EC" id="2.4.1.21"/>
    </reaction>
</comment>
<comment type="pathway">
    <text evidence="1">Glycan biosynthesis; glycogen biosynthesis.</text>
</comment>
<comment type="similarity">
    <text evidence="1">Belongs to the glycosyltransferase 1 family. Bacterial/plant glycogen synthase subfamily.</text>
</comment>
<evidence type="ECO:0000255" key="1">
    <source>
        <dbReference type="HAMAP-Rule" id="MF_00484"/>
    </source>
</evidence>
<dbReference type="EC" id="2.4.1.21" evidence="1"/>
<dbReference type="EMBL" id="CP000248">
    <property type="protein sequence ID" value="ABD26096.1"/>
    <property type="molecule type" value="Genomic_DNA"/>
</dbReference>
<dbReference type="RefSeq" id="WP_011445306.1">
    <property type="nucleotide sequence ID" value="NC_007794.1"/>
</dbReference>
<dbReference type="SMR" id="Q2G7S7"/>
<dbReference type="STRING" id="279238.Saro_1656"/>
<dbReference type="CAZy" id="GT5">
    <property type="family name" value="Glycosyltransferase Family 5"/>
</dbReference>
<dbReference type="KEGG" id="nar:Saro_1656"/>
<dbReference type="eggNOG" id="COG0297">
    <property type="taxonomic scope" value="Bacteria"/>
</dbReference>
<dbReference type="HOGENOM" id="CLU_009583_18_4_5"/>
<dbReference type="UniPathway" id="UPA00164"/>
<dbReference type="Proteomes" id="UP000009134">
    <property type="component" value="Chromosome"/>
</dbReference>
<dbReference type="GO" id="GO:0005829">
    <property type="term" value="C:cytosol"/>
    <property type="evidence" value="ECO:0007669"/>
    <property type="project" value="TreeGrafter"/>
</dbReference>
<dbReference type="GO" id="GO:0009011">
    <property type="term" value="F:alpha-1,4-glucan glucosyltransferase (ADP-glucose donor) activity"/>
    <property type="evidence" value="ECO:0007669"/>
    <property type="project" value="UniProtKB-UniRule"/>
</dbReference>
<dbReference type="GO" id="GO:0004373">
    <property type="term" value="F:alpha-1,4-glucan glucosyltransferase (UDP-glucose donor) activity"/>
    <property type="evidence" value="ECO:0007669"/>
    <property type="project" value="InterPro"/>
</dbReference>
<dbReference type="GO" id="GO:0005978">
    <property type="term" value="P:glycogen biosynthetic process"/>
    <property type="evidence" value="ECO:0007669"/>
    <property type="project" value="UniProtKB-UniRule"/>
</dbReference>
<dbReference type="CDD" id="cd03791">
    <property type="entry name" value="GT5_Glycogen_synthase_DULL1-like"/>
    <property type="match status" value="1"/>
</dbReference>
<dbReference type="Gene3D" id="3.40.50.2000">
    <property type="entry name" value="Glycogen Phosphorylase B"/>
    <property type="match status" value="2"/>
</dbReference>
<dbReference type="HAMAP" id="MF_00484">
    <property type="entry name" value="Glycogen_synth"/>
    <property type="match status" value="1"/>
</dbReference>
<dbReference type="InterPro" id="IPR001296">
    <property type="entry name" value="Glyco_trans_1"/>
</dbReference>
<dbReference type="InterPro" id="IPR011835">
    <property type="entry name" value="GS/SS"/>
</dbReference>
<dbReference type="InterPro" id="IPR013534">
    <property type="entry name" value="Starch_synth_cat_dom"/>
</dbReference>
<dbReference type="NCBIfam" id="TIGR02095">
    <property type="entry name" value="glgA"/>
    <property type="match status" value="1"/>
</dbReference>
<dbReference type="NCBIfam" id="NF001899">
    <property type="entry name" value="PRK00654.1-2"/>
    <property type="match status" value="1"/>
</dbReference>
<dbReference type="PANTHER" id="PTHR45825:SF11">
    <property type="entry name" value="ALPHA AMYLASE DOMAIN-CONTAINING PROTEIN"/>
    <property type="match status" value="1"/>
</dbReference>
<dbReference type="PANTHER" id="PTHR45825">
    <property type="entry name" value="GRANULE-BOUND STARCH SYNTHASE 1, CHLOROPLASTIC/AMYLOPLASTIC"/>
    <property type="match status" value="1"/>
</dbReference>
<dbReference type="Pfam" id="PF08323">
    <property type="entry name" value="Glyco_transf_5"/>
    <property type="match status" value="1"/>
</dbReference>
<dbReference type="Pfam" id="PF00534">
    <property type="entry name" value="Glycos_transf_1"/>
    <property type="match status" value="1"/>
</dbReference>
<dbReference type="SUPFAM" id="SSF53756">
    <property type="entry name" value="UDP-Glycosyltransferase/glycogen phosphorylase"/>
    <property type="match status" value="1"/>
</dbReference>
<sequence>MTIKVLSVASEAVPLVKTGGLADVAGALPSAVAPHGVGMTTILPGYPAVMKALARPRALHTWNSLLGEKARLVSGKIDGHPLLVLDAPAFFQRDGTPYVDSSGRDWADNWRRFAAFGRAAADVAGGAVKGRAFDLVHAHDWQAAMALAYLRFAPPPGGRRVPSVMTIHNMAFQGHYGADLFPALGLPPQAWAMDGVEYHGGVGYLKAGLEAASAITTVSPTYAREIRTPEFGMGLEGLVVSRGNRVSGIVNGIDTAQWNPETDPALAARFGVKSLARRVTNKRALEAEFALEADDGPLFVVITRLTWQKGIDVLLECIDHLVGIGGRLALLGSGDKAMENAFHAAATRHPGKVGVRIGYDEALSHRMQAGGDAILVPSRFEPCGLTQLYGLAYGCVPVVARTGGLADTVIDANLAAVMAGVATGVQFEGVNYPSVSDAISRAVTLYRQPDVWRAMQRAGMKTDFSWSRSGKAYADLYAALIAEDQ</sequence>
<name>GLGA_NOVAD</name>
<reference key="1">
    <citation type="submission" date="2006-01" db="EMBL/GenBank/DDBJ databases">
        <title>Complete sequence of Novosphingobium aromaticivorans DSM 12444.</title>
        <authorList>
            <consortium name="US DOE Joint Genome Institute"/>
            <person name="Copeland A."/>
            <person name="Lucas S."/>
            <person name="Lapidus A."/>
            <person name="Barry K."/>
            <person name="Detter J.C."/>
            <person name="Glavina T."/>
            <person name="Hammon N."/>
            <person name="Israni S."/>
            <person name="Pitluck S."/>
            <person name="Chain P."/>
            <person name="Malfatti S."/>
            <person name="Shin M."/>
            <person name="Vergez L."/>
            <person name="Schmutz J."/>
            <person name="Larimer F."/>
            <person name="Land M."/>
            <person name="Kyrpides N."/>
            <person name="Ivanova N."/>
            <person name="Fredrickson J."/>
            <person name="Balkwill D."/>
            <person name="Romine M.F."/>
            <person name="Richardson P."/>
        </authorList>
    </citation>
    <scope>NUCLEOTIDE SEQUENCE [LARGE SCALE GENOMIC DNA]</scope>
    <source>
        <strain>ATCC 700278 / DSM 12444 / CCUG 56034 / CIP 105152 / NBRC 16084 / F199</strain>
    </source>
</reference>
<keyword id="KW-0320">Glycogen biosynthesis</keyword>
<keyword id="KW-0328">Glycosyltransferase</keyword>
<keyword id="KW-1185">Reference proteome</keyword>
<keyword id="KW-0808">Transferase</keyword>
<protein>
    <recommendedName>
        <fullName evidence="1">Glycogen synthase</fullName>
        <ecNumber evidence="1">2.4.1.21</ecNumber>
    </recommendedName>
    <alternativeName>
        <fullName evidence="1">Starch [bacterial glycogen] synthase</fullName>
    </alternativeName>
</protein>
<feature type="chain" id="PRO_0000241795" description="Glycogen synthase">
    <location>
        <begin position="1"/>
        <end position="485"/>
    </location>
</feature>
<feature type="binding site" evidence="1">
    <location>
        <position position="17"/>
    </location>
    <ligand>
        <name>ADP-alpha-D-glucose</name>
        <dbReference type="ChEBI" id="CHEBI:57498"/>
    </ligand>
</feature>
<gene>
    <name evidence="1" type="primary">glgA</name>
    <name type="ordered locus">Saro_1656</name>
</gene>
<proteinExistence type="inferred from homology"/>
<accession>Q2G7S7</accession>
<organism>
    <name type="scientific">Novosphingobium aromaticivorans (strain ATCC 700278 / DSM 12444 / CCUG 56034 / CIP 105152 / NBRC 16084 / F199)</name>
    <dbReference type="NCBI Taxonomy" id="279238"/>
    <lineage>
        <taxon>Bacteria</taxon>
        <taxon>Pseudomonadati</taxon>
        <taxon>Pseudomonadota</taxon>
        <taxon>Alphaproteobacteria</taxon>
        <taxon>Sphingomonadales</taxon>
        <taxon>Sphingomonadaceae</taxon>
        <taxon>Novosphingobium</taxon>
    </lineage>
</organism>